<feature type="chain" id="PRO_1000121974" description="Chromosomal replication initiator protein DnaA">
    <location>
        <begin position="1"/>
        <end position="467"/>
    </location>
</feature>
<feature type="region of interest" description="Domain I, interacts with DnaA modulators" evidence="1">
    <location>
        <begin position="1"/>
        <end position="90"/>
    </location>
</feature>
<feature type="region of interest" description="Domain II" evidence="1">
    <location>
        <begin position="91"/>
        <end position="130"/>
    </location>
</feature>
<feature type="region of interest" description="Disordered" evidence="2">
    <location>
        <begin position="97"/>
        <end position="119"/>
    </location>
</feature>
<feature type="region of interest" description="Domain III, AAA+ region" evidence="1">
    <location>
        <begin position="131"/>
        <end position="347"/>
    </location>
</feature>
<feature type="region of interest" description="Domain IV, binds dsDNA" evidence="1">
    <location>
        <begin position="348"/>
        <end position="467"/>
    </location>
</feature>
<feature type="compositionally biased region" description="Low complexity" evidence="2">
    <location>
        <begin position="97"/>
        <end position="111"/>
    </location>
</feature>
<feature type="binding site" evidence="1">
    <location>
        <position position="175"/>
    </location>
    <ligand>
        <name>ATP</name>
        <dbReference type="ChEBI" id="CHEBI:30616"/>
    </ligand>
</feature>
<feature type="binding site" evidence="1">
    <location>
        <position position="177"/>
    </location>
    <ligand>
        <name>ATP</name>
        <dbReference type="ChEBI" id="CHEBI:30616"/>
    </ligand>
</feature>
<feature type="binding site" evidence="1">
    <location>
        <position position="178"/>
    </location>
    <ligand>
        <name>ATP</name>
        <dbReference type="ChEBI" id="CHEBI:30616"/>
    </ligand>
</feature>
<feature type="binding site" evidence="1">
    <location>
        <position position="179"/>
    </location>
    <ligand>
        <name>ATP</name>
        <dbReference type="ChEBI" id="CHEBI:30616"/>
    </ligand>
</feature>
<sequence length="467" mass="52541">MSLSLWQQCLARLQDELPATEFSMWIRPLQAELSDNTLALYAPNRFVLDWVRDKYLNNINGLLTSFCGADAPQLRFEVGTKSVTQTPQAAVTSNVAAPAQVAQTQPQRAAPSTRSGWDNVPAPAEPTYRSNVNVKHTFDNFVEGKSNQLARAAARQVADNPGGAYNPLFLYGGTGLGKTHLLHAVGNGIMARKPNAKVVYMHSERFVQDMVKALQNNAIEEFKRYYRSVDALLIDDIQFFANKERSQEEFFHTFNALLEGNQQIILTSDRYPKEINGVEDRLKSRFGWGLTVAIEPPELETRVAILMKKADENDIRLPGEVAFFIAKRLRSNVRELEGALNRVIANANFTGRAITIDFVREALRDLLALQEKLVTIDNIQKTVAEYYKIKVADLLSKRRSRSVARPRQMAMALAKELTNHSLPEIGDAFGGRDHTTVLHACRKIEQLREESHDIKEDFSNLIRTLSS</sequence>
<accession>B5YXA4</accession>
<organism>
    <name type="scientific">Escherichia coli O157:H7 (strain EC4115 / EHEC)</name>
    <dbReference type="NCBI Taxonomy" id="444450"/>
    <lineage>
        <taxon>Bacteria</taxon>
        <taxon>Pseudomonadati</taxon>
        <taxon>Pseudomonadota</taxon>
        <taxon>Gammaproteobacteria</taxon>
        <taxon>Enterobacterales</taxon>
        <taxon>Enterobacteriaceae</taxon>
        <taxon>Escherichia</taxon>
    </lineage>
</organism>
<protein>
    <recommendedName>
        <fullName evidence="1">Chromosomal replication initiator protein DnaA</fullName>
    </recommendedName>
</protein>
<dbReference type="EMBL" id="CP001164">
    <property type="protein sequence ID" value="ACI34562.1"/>
    <property type="molecule type" value="Genomic_DNA"/>
</dbReference>
<dbReference type="RefSeq" id="WP_000059116.1">
    <property type="nucleotide sequence ID" value="NC_011353.1"/>
</dbReference>
<dbReference type="SMR" id="B5YXA4"/>
<dbReference type="KEGG" id="ecf:ECH74115_5130"/>
<dbReference type="HOGENOM" id="CLU_026910_0_1_6"/>
<dbReference type="GO" id="GO:0005737">
    <property type="term" value="C:cytoplasm"/>
    <property type="evidence" value="ECO:0007669"/>
    <property type="project" value="UniProtKB-SubCell"/>
</dbReference>
<dbReference type="GO" id="GO:0005886">
    <property type="term" value="C:plasma membrane"/>
    <property type="evidence" value="ECO:0007669"/>
    <property type="project" value="TreeGrafter"/>
</dbReference>
<dbReference type="GO" id="GO:0005524">
    <property type="term" value="F:ATP binding"/>
    <property type="evidence" value="ECO:0007669"/>
    <property type="project" value="UniProtKB-UniRule"/>
</dbReference>
<dbReference type="GO" id="GO:0016887">
    <property type="term" value="F:ATP hydrolysis activity"/>
    <property type="evidence" value="ECO:0007669"/>
    <property type="project" value="InterPro"/>
</dbReference>
<dbReference type="GO" id="GO:0003688">
    <property type="term" value="F:DNA replication origin binding"/>
    <property type="evidence" value="ECO:0007669"/>
    <property type="project" value="UniProtKB-UniRule"/>
</dbReference>
<dbReference type="GO" id="GO:0008289">
    <property type="term" value="F:lipid binding"/>
    <property type="evidence" value="ECO:0007669"/>
    <property type="project" value="UniProtKB-KW"/>
</dbReference>
<dbReference type="GO" id="GO:0006270">
    <property type="term" value="P:DNA replication initiation"/>
    <property type="evidence" value="ECO:0007669"/>
    <property type="project" value="UniProtKB-UniRule"/>
</dbReference>
<dbReference type="GO" id="GO:0006275">
    <property type="term" value="P:regulation of DNA replication"/>
    <property type="evidence" value="ECO:0007669"/>
    <property type="project" value="UniProtKB-UniRule"/>
</dbReference>
<dbReference type="CDD" id="cd00009">
    <property type="entry name" value="AAA"/>
    <property type="match status" value="1"/>
</dbReference>
<dbReference type="CDD" id="cd06571">
    <property type="entry name" value="Bac_DnaA_C"/>
    <property type="match status" value="1"/>
</dbReference>
<dbReference type="FunFam" id="1.10.1750.10:FF:000001">
    <property type="entry name" value="Chromosomal replication initiator protein DnaA"/>
    <property type="match status" value="1"/>
</dbReference>
<dbReference type="FunFam" id="1.10.8.60:FF:000003">
    <property type="entry name" value="Chromosomal replication initiator protein DnaA"/>
    <property type="match status" value="1"/>
</dbReference>
<dbReference type="FunFam" id="3.30.300.180:FF:000001">
    <property type="entry name" value="Chromosomal replication initiator protein DnaA"/>
    <property type="match status" value="1"/>
</dbReference>
<dbReference type="FunFam" id="3.40.50.300:FF:000103">
    <property type="entry name" value="Chromosomal replication initiator protein DnaA"/>
    <property type="match status" value="1"/>
</dbReference>
<dbReference type="Gene3D" id="1.10.1750.10">
    <property type="match status" value="1"/>
</dbReference>
<dbReference type="Gene3D" id="1.10.8.60">
    <property type="match status" value="1"/>
</dbReference>
<dbReference type="Gene3D" id="3.30.300.180">
    <property type="match status" value="1"/>
</dbReference>
<dbReference type="Gene3D" id="3.40.50.300">
    <property type="entry name" value="P-loop containing nucleotide triphosphate hydrolases"/>
    <property type="match status" value="1"/>
</dbReference>
<dbReference type="HAMAP" id="MF_00377">
    <property type="entry name" value="DnaA_bact"/>
    <property type="match status" value="1"/>
</dbReference>
<dbReference type="InterPro" id="IPR003593">
    <property type="entry name" value="AAA+_ATPase"/>
</dbReference>
<dbReference type="InterPro" id="IPR001957">
    <property type="entry name" value="Chromosome_initiator_DnaA"/>
</dbReference>
<dbReference type="InterPro" id="IPR020591">
    <property type="entry name" value="Chromosome_initiator_DnaA-like"/>
</dbReference>
<dbReference type="InterPro" id="IPR018312">
    <property type="entry name" value="Chromosome_initiator_DnaA_CS"/>
</dbReference>
<dbReference type="InterPro" id="IPR013159">
    <property type="entry name" value="DnaA_C"/>
</dbReference>
<dbReference type="InterPro" id="IPR013317">
    <property type="entry name" value="DnaA_dom"/>
</dbReference>
<dbReference type="InterPro" id="IPR024633">
    <property type="entry name" value="DnaA_N_dom"/>
</dbReference>
<dbReference type="InterPro" id="IPR038454">
    <property type="entry name" value="DnaA_N_sf"/>
</dbReference>
<dbReference type="InterPro" id="IPR027417">
    <property type="entry name" value="P-loop_NTPase"/>
</dbReference>
<dbReference type="InterPro" id="IPR010921">
    <property type="entry name" value="Trp_repressor/repl_initiator"/>
</dbReference>
<dbReference type="NCBIfam" id="TIGR00362">
    <property type="entry name" value="DnaA"/>
    <property type="match status" value="1"/>
</dbReference>
<dbReference type="PANTHER" id="PTHR30050">
    <property type="entry name" value="CHROMOSOMAL REPLICATION INITIATOR PROTEIN DNAA"/>
    <property type="match status" value="1"/>
</dbReference>
<dbReference type="PANTHER" id="PTHR30050:SF2">
    <property type="entry name" value="CHROMOSOMAL REPLICATION INITIATOR PROTEIN DNAA"/>
    <property type="match status" value="1"/>
</dbReference>
<dbReference type="Pfam" id="PF00308">
    <property type="entry name" value="Bac_DnaA"/>
    <property type="match status" value="1"/>
</dbReference>
<dbReference type="Pfam" id="PF08299">
    <property type="entry name" value="Bac_DnaA_C"/>
    <property type="match status" value="1"/>
</dbReference>
<dbReference type="Pfam" id="PF11638">
    <property type="entry name" value="DnaA_N"/>
    <property type="match status" value="1"/>
</dbReference>
<dbReference type="PRINTS" id="PR00051">
    <property type="entry name" value="DNAA"/>
</dbReference>
<dbReference type="SMART" id="SM00382">
    <property type="entry name" value="AAA"/>
    <property type="match status" value="1"/>
</dbReference>
<dbReference type="SMART" id="SM00760">
    <property type="entry name" value="Bac_DnaA_C"/>
    <property type="match status" value="1"/>
</dbReference>
<dbReference type="SUPFAM" id="SSF52540">
    <property type="entry name" value="P-loop containing nucleoside triphosphate hydrolases"/>
    <property type="match status" value="1"/>
</dbReference>
<dbReference type="SUPFAM" id="SSF48295">
    <property type="entry name" value="TrpR-like"/>
    <property type="match status" value="1"/>
</dbReference>
<dbReference type="PROSITE" id="PS01008">
    <property type="entry name" value="DNAA"/>
    <property type="match status" value="1"/>
</dbReference>
<name>DNAA_ECO5E</name>
<keyword id="KW-0067">ATP-binding</keyword>
<keyword id="KW-0963">Cytoplasm</keyword>
<keyword id="KW-0235">DNA replication</keyword>
<keyword id="KW-0238">DNA-binding</keyword>
<keyword id="KW-0446">Lipid-binding</keyword>
<keyword id="KW-0547">Nucleotide-binding</keyword>
<reference key="1">
    <citation type="journal article" date="2011" name="Proc. Natl. Acad. Sci. U.S.A.">
        <title>Genomic anatomy of Escherichia coli O157:H7 outbreaks.</title>
        <authorList>
            <person name="Eppinger M."/>
            <person name="Mammel M.K."/>
            <person name="Leclerc J.E."/>
            <person name="Ravel J."/>
            <person name="Cebula T.A."/>
        </authorList>
    </citation>
    <scope>NUCLEOTIDE SEQUENCE [LARGE SCALE GENOMIC DNA]</scope>
    <source>
        <strain>EC4115 / EHEC</strain>
    </source>
</reference>
<evidence type="ECO:0000255" key="1">
    <source>
        <dbReference type="HAMAP-Rule" id="MF_00377"/>
    </source>
</evidence>
<evidence type="ECO:0000256" key="2">
    <source>
        <dbReference type="SAM" id="MobiDB-lite"/>
    </source>
</evidence>
<comment type="function">
    <text evidence="1">Plays an essential role in the initiation and regulation of chromosomal replication. ATP-DnaA binds to the origin of replication (oriC) to initiate formation of the DNA replication initiation complex once per cell cycle. Binds the DnaA box (a 9 base pair repeat at the origin) and separates the double-stranded (ds)DNA. Forms a right-handed helical filament on oriC DNA; dsDNA binds to the exterior of the filament while single-stranded (ss)DNA is stabiized in the filament's interior. The ATP-DnaA-oriC complex binds and stabilizes one strand of the AT-rich DNA unwinding element (DUE), permitting loading of DNA polymerase. After initiation quickly degrades to an ADP-DnaA complex that is not apt for DNA replication. Binds acidic phospholipids.</text>
</comment>
<comment type="subunit">
    <text evidence="1">Oligomerizes as a right-handed, spiral filament on DNA at oriC.</text>
</comment>
<comment type="subcellular location">
    <subcellularLocation>
        <location evidence="1">Cytoplasm</location>
    </subcellularLocation>
</comment>
<comment type="domain">
    <text evidence="1">Domain I is involved in oligomerization and binding regulators, domain II is flexibile and of varying length in different bacteria, domain III forms the AAA+ region, while domain IV binds dsDNA.</text>
</comment>
<comment type="similarity">
    <text evidence="1">Belongs to the DnaA family.</text>
</comment>
<proteinExistence type="inferred from homology"/>
<gene>
    <name evidence="1" type="primary">dnaA</name>
    <name type="ordered locus">ECH74115_5130</name>
</gene>